<evidence type="ECO:0000255" key="1">
    <source>
        <dbReference type="HAMAP-Rule" id="MF_00651"/>
    </source>
</evidence>
<sequence>MFQSLIAIDYGKARIGIASGQMITKTATPIGTVEAYDGVPNWIELDKIIKRWNPSDIIIGLPLDTQNFETDITKSAKDFAKEVQQRYQRKVHLINEAYSTREARWRLEEVKSKKVSHIKVDALAACVILETWMSEN</sequence>
<comment type="function">
    <text evidence="1">Could be a nuclease involved in processing of the 5'-end of pre-16S rRNA.</text>
</comment>
<comment type="subcellular location">
    <subcellularLocation>
        <location evidence="1">Cytoplasm</location>
    </subcellularLocation>
</comment>
<comment type="similarity">
    <text evidence="1">Belongs to the YqgF nuclease family.</text>
</comment>
<feature type="chain" id="PRO_1000061518" description="Putative pre-16S rRNA nuclease">
    <location>
        <begin position="1"/>
        <end position="136"/>
    </location>
</feature>
<protein>
    <recommendedName>
        <fullName evidence="1">Putative pre-16S rRNA nuclease</fullName>
        <ecNumber evidence="1">3.1.-.-</ecNumber>
    </recommendedName>
</protein>
<organism>
    <name type="scientific">Francisella tularensis subsp. holarctica (strain OSU18)</name>
    <dbReference type="NCBI Taxonomy" id="393011"/>
    <lineage>
        <taxon>Bacteria</taxon>
        <taxon>Pseudomonadati</taxon>
        <taxon>Pseudomonadota</taxon>
        <taxon>Gammaproteobacteria</taxon>
        <taxon>Thiotrichales</taxon>
        <taxon>Francisellaceae</taxon>
        <taxon>Francisella</taxon>
    </lineage>
</organism>
<keyword id="KW-0963">Cytoplasm</keyword>
<keyword id="KW-0378">Hydrolase</keyword>
<keyword id="KW-0540">Nuclease</keyword>
<keyword id="KW-0690">Ribosome biogenesis</keyword>
<name>YQGF_FRATO</name>
<gene>
    <name type="ordered locus">FTH_1192</name>
</gene>
<proteinExistence type="inferred from homology"/>
<accession>Q0BLI1</accession>
<reference key="1">
    <citation type="journal article" date="2006" name="J. Bacteriol.">
        <title>Chromosome rearrangement and diversification of Francisella tularensis revealed by the type B (OSU18) genome sequence.</title>
        <authorList>
            <person name="Petrosino J.F."/>
            <person name="Xiang Q."/>
            <person name="Karpathy S.E."/>
            <person name="Jiang H."/>
            <person name="Yerrapragada S."/>
            <person name="Liu Y."/>
            <person name="Gioia J."/>
            <person name="Hemphill L."/>
            <person name="Gonzalez A."/>
            <person name="Raghavan T.M."/>
            <person name="Uzman A."/>
            <person name="Fox G.E."/>
            <person name="Highlander S."/>
            <person name="Reichard M."/>
            <person name="Morton R.J."/>
            <person name="Clinkenbeard K.D."/>
            <person name="Weinstock G.M."/>
        </authorList>
    </citation>
    <scope>NUCLEOTIDE SEQUENCE [LARGE SCALE GENOMIC DNA]</scope>
    <source>
        <strain>OSU18</strain>
    </source>
</reference>
<dbReference type="EC" id="3.1.-.-" evidence="1"/>
<dbReference type="EMBL" id="CP000437">
    <property type="protein sequence ID" value="ABI83053.1"/>
    <property type="molecule type" value="Genomic_DNA"/>
</dbReference>
<dbReference type="SMR" id="Q0BLI1"/>
<dbReference type="KEGG" id="fth:FTH_1192"/>
<dbReference type="GO" id="GO:0005829">
    <property type="term" value="C:cytosol"/>
    <property type="evidence" value="ECO:0007669"/>
    <property type="project" value="TreeGrafter"/>
</dbReference>
<dbReference type="GO" id="GO:0004518">
    <property type="term" value="F:nuclease activity"/>
    <property type="evidence" value="ECO:0007669"/>
    <property type="project" value="UniProtKB-KW"/>
</dbReference>
<dbReference type="GO" id="GO:0000967">
    <property type="term" value="P:rRNA 5'-end processing"/>
    <property type="evidence" value="ECO:0007669"/>
    <property type="project" value="UniProtKB-UniRule"/>
</dbReference>
<dbReference type="CDD" id="cd16964">
    <property type="entry name" value="YqgF"/>
    <property type="match status" value="1"/>
</dbReference>
<dbReference type="Gene3D" id="3.30.420.140">
    <property type="entry name" value="YqgF/RNase H-like domain"/>
    <property type="match status" value="1"/>
</dbReference>
<dbReference type="HAMAP" id="MF_00651">
    <property type="entry name" value="Nuclease_YqgF"/>
    <property type="match status" value="1"/>
</dbReference>
<dbReference type="InterPro" id="IPR012337">
    <property type="entry name" value="RNaseH-like_sf"/>
</dbReference>
<dbReference type="InterPro" id="IPR005227">
    <property type="entry name" value="YqgF"/>
</dbReference>
<dbReference type="InterPro" id="IPR006641">
    <property type="entry name" value="YqgF/RNaseH-like_dom"/>
</dbReference>
<dbReference type="InterPro" id="IPR037027">
    <property type="entry name" value="YqgF/RNaseH-like_dom_sf"/>
</dbReference>
<dbReference type="NCBIfam" id="TIGR00250">
    <property type="entry name" value="RNAse_H_YqgF"/>
    <property type="match status" value="1"/>
</dbReference>
<dbReference type="PANTHER" id="PTHR33317">
    <property type="entry name" value="POLYNUCLEOTIDYL TRANSFERASE, RIBONUCLEASE H-LIKE SUPERFAMILY PROTEIN"/>
    <property type="match status" value="1"/>
</dbReference>
<dbReference type="PANTHER" id="PTHR33317:SF4">
    <property type="entry name" value="POLYNUCLEOTIDYL TRANSFERASE, RIBONUCLEASE H-LIKE SUPERFAMILY PROTEIN"/>
    <property type="match status" value="1"/>
</dbReference>
<dbReference type="Pfam" id="PF03652">
    <property type="entry name" value="RuvX"/>
    <property type="match status" value="1"/>
</dbReference>
<dbReference type="SMART" id="SM00732">
    <property type="entry name" value="YqgFc"/>
    <property type="match status" value="1"/>
</dbReference>
<dbReference type="SUPFAM" id="SSF53098">
    <property type="entry name" value="Ribonuclease H-like"/>
    <property type="match status" value="1"/>
</dbReference>